<sequence length="82" mass="9108">MVTIRLARGGAKKRPFYNIVVADSRNARDGRFIERVGFFNPLARGQEETLRLDLARVEHWVANGAATTDRVAKLIKDAKAAA</sequence>
<protein>
    <recommendedName>
        <fullName evidence="1">Small ribosomal subunit protein bS16</fullName>
    </recommendedName>
    <alternativeName>
        <fullName evidence="2">30S ribosomal protein S16</fullName>
    </alternativeName>
</protein>
<name>RS16_SHEON</name>
<proteinExistence type="inferred from homology"/>
<reference key="1">
    <citation type="journal article" date="2002" name="Nat. Biotechnol.">
        <title>Genome sequence of the dissimilatory metal ion-reducing bacterium Shewanella oneidensis.</title>
        <authorList>
            <person name="Heidelberg J.F."/>
            <person name="Paulsen I.T."/>
            <person name="Nelson K.E."/>
            <person name="Gaidos E.J."/>
            <person name="Nelson W.C."/>
            <person name="Read T.D."/>
            <person name="Eisen J.A."/>
            <person name="Seshadri R."/>
            <person name="Ward N.L."/>
            <person name="Methe B.A."/>
            <person name="Clayton R.A."/>
            <person name="Meyer T."/>
            <person name="Tsapin A."/>
            <person name="Scott J."/>
            <person name="Beanan M.J."/>
            <person name="Brinkac L.M."/>
            <person name="Daugherty S.C."/>
            <person name="DeBoy R.T."/>
            <person name="Dodson R.J."/>
            <person name="Durkin A.S."/>
            <person name="Haft D.H."/>
            <person name="Kolonay J.F."/>
            <person name="Madupu R."/>
            <person name="Peterson J.D."/>
            <person name="Umayam L.A."/>
            <person name="White O."/>
            <person name="Wolf A.M."/>
            <person name="Vamathevan J.J."/>
            <person name="Weidman J.F."/>
            <person name="Impraim M."/>
            <person name="Lee K."/>
            <person name="Berry K.J."/>
            <person name="Lee C."/>
            <person name="Mueller J."/>
            <person name="Khouri H.M."/>
            <person name="Gill J."/>
            <person name="Utterback T.R."/>
            <person name="McDonald L.A."/>
            <person name="Feldblyum T.V."/>
            <person name="Smith H.O."/>
            <person name="Venter J.C."/>
            <person name="Nealson K.H."/>
            <person name="Fraser C.M."/>
        </authorList>
    </citation>
    <scope>NUCLEOTIDE SEQUENCE [LARGE SCALE GENOMIC DNA]</scope>
    <source>
        <strain>ATCC 700550 / JCM 31522 / CIP 106686 / LMG 19005 / NCIMB 14063 / MR-1</strain>
    </source>
</reference>
<keyword id="KW-1185">Reference proteome</keyword>
<keyword id="KW-0687">Ribonucleoprotein</keyword>
<keyword id="KW-0689">Ribosomal protein</keyword>
<organism>
    <name type="scientific">Shewanella oneidensis (strain ATCC 700550 / JCM 31522 / CIP 106686 / LMG 19005 / NCIMB 14063 / MR-1)</name>
    <dbReference type="NCBI Taxonomy" id="211586"/>
    <lineage>
        <taxon>Bacteria</taxon>
        <taxon>Pseudomonadati</taxon>
        <taxon>Pseudomonadota</taxon>
        <taxon>Gammaproteobacteria</taxon>
        <taxon>Alteromonadales</taxon>
        <taxon>Shewanellaceae</taxon>
        <taxon>Shewanella</taxon>
    </lineage>
</organism>
<accession>Q8EH72</accession>
<dbReference type="EMBL" id="AE014299">
    <property type="protein sequence ID" value="AAN54422.1"/>
    <property type="molecule type" value="Genomic_DNA"/>
</dbReference>
<dbReference type="RefSeq" id="NP_716977.1">
    <property type="nucleotide sequence ID" value="NC_004347.2"/>
</dbReference>
<dbReference type="RefSeq" id="WP_011071566.1">
    <property type="nucleotide sequence ID" value="NZ_CP053946.1"/>
</dbReference>
<dbReference type="SMR" id="Q8EH72"/>
<dbReference type="STRING" id="211586.SO_1357"/>
<dbReference type="PaxDb" id="211586-SO_1357"/>
<dbReference type="GeneID" id="94728940"/>
<dbReference type="KEGG" id="son:SO_1357"/>
<dbReference type="PATRIC" id="fig|211586.12.peg.1306"/>
<dbReference type="eggNOG" id="COG0228">
    <property type="taxonomic scope" value="Bacteria"/>
</dbReference>
<dbReference type="HOGENOM" id="CLU_100590_5_1_6"/>
<dbReference type="OrthoDB" id="9807878at2"/>
<dbReference type="PhylomeDB" id="Q8EH72"/>
<dbReference type="BioCyc" id="SONE211586:G1GMP-1255-MONOMER"/>
<dbReference type="Proteomes" id="UP000008186">
    <property type="component" value="Chromosome"/>
</dbReference>
<dbReference type="GO" id="GO:0005737">
    <property type="term" value="C:cytoplasm"/>
    <property type="evidence" value="ECO:0007669"/>
    <property type="project" value="UniProtKB-ARBA"/>
</dbReference>
<dbReference type="GO" id="GO:0015935">
    <property type="term" value="C:small ribosomal subunit"/>
    <property type="evidence" value="ECO:0000318"/>
    <property type="project" value="GO_Central"/>
</dbReference>
<dbReference type="GO" id="GO:0003735">
    <property type="term" value="F:structural constituent of ribosome"/>
    <property type="evidence" value="ECO:0000318"/>
    <property type="project" value="GO_Central"/>
</dbReference>
<dbReference type="GO" id="GO:0006412">
    <property type="term" value="P:translation"/>
    <property type="evidence" value="ECO:0007669"/>
    <property type="project" value="UniProtKB-UniRule"/>
</dbReference>
<dbReference type="FunFam" id="3.30.1320.10:FF:000001">
    <property type="entry name" value="30S ribosomal protein S16"/>
    <property type="match status" value="1"/>
</dbReference>
<dbReference type="Gene3D" id="3.30.1320.10">
    <property type="match status" value="1"/>
</dbReference>
<dbReference type="HAMAP" id="MF_00385">
    <property type="entry name" value="Ribosomal_bS16"/>
    <property type="match status" value="1"/>
</dbReference>
<dbReference type="InterPro" id="IPR000307">
    <property type="entry name" value="Ribosomal_bS16"/>
</dbReference>
<dbReference type="InterPro" id="IPR020592">
    <property type="entry name" value="Ribosomal_bS16_CS"/>
</dbReference>
<dbReference type="InterPro" id="IPR023803">
    <property type="entry name" value="Ribosomal_bS16_dom_sf"/>
</dbReference>
<dbReference type="NCBIfam" id="TIGR00002">
    <property type="entry name" value="S16"/>
    <property type="match status" value="1"/>
</dbReference>
<dbReference type="PANTHER" id="PTHR12919">
    <property type="entry name" value="30S RIBOSOMAL PROTEIN S16"/>
    <property type="match status" value="1"/>
</dbReference>
<dbReference type="PANTHER" id="PTHR12919:SF20">
    <property type="entry name" value="SMALL RIBOSOMAL SUBUNIT PROTEIN BS16M"/>
    <property type="match status" value="1"/>
</dbReference>
<dbReference type="Pfam" id="PF00886">
    <property type="entry name" value="Ribosomal_S16"/>
    <property type="match status" value="1"/>
</dbReference>
<dbReference type="SUPFAM" id="SSF54565">
    <property type="entry name" value="Ribosomal protein S16"/>
    <property type="match status" value="1"/>
</dbReference>
<dbReference type="PROSITE" id="PS00732">
    <property type="entry name" value="RIBOSOMAL_S16"/>
    <property type="match status" value="1"/>
</dbReference>
<comment type="similarity">
    <text evidence="1">Belongs to the bacterial ribosomal protein bS16 family.</text>
</comment>
<gene>
    <name evidence="1" type="primary">rpsP</name>
    <name type="ordered locus">SO_1357</name>
</gene>
<evidence type="ECO:0000255" key="1">
    <source>
        <dbReference type="HAMAP-Rule" id="MF_00385"/>
    </source>
</evidence>
<evidence type="ECO:0000305" key="2"/>
<feature type="chain" id="PRO_0000167238" description="Small ribosomal subunit protein bS16">
    <location>
        <begin position="1"/>
        <end position="82"/>
    </location>
</feature>